<accession>Q6B8T1</accession>
<name>ODPB_GRATL</name>
<feature type="chain" id="PRO_0000280108" description="Pyruvate dehydrogenase E1 component subunit beta">
    <location>
        <begin position="1"/>
        <end position="323"/>
    </location>
</feature>
<feature type="binding site" evidence="2">
    <location>
        <position position="60"/>
    </location>
    <ligand>
        <name>thiamine diphosphate</name>
        <dbReference type="ChEBI" id="CHEBI:58937"/>
        <note>ligand shared with alpha subunit</note>
    </ligand>
</feature>
<feature type="binding site" evidence="2">
    <location>
        <position position="113"/>
    </location>
    <ligand>
        <name>K(+)</name>
        <dbReference type="ChEBI" id="CHEBI:29103"/>
        <note>structural</note>
    </ligand>
</feature>
<feature type="binding site" evidence="2">
    <location>
        <position position="161"/>
    </location>
    <ligand>
        <name>K(+)</name>
        <dbReference type="ChEBI" id="CHEBI:29103"/>
        <note>structural</note>
    </ligand>
</feature>
<feature type="binding site" evidence="2">
    <location>
        <position position="162"/>
    </location>
    <ligand>
        <name>K(+)</name>
        <dbReference type="ChEBI" id="CHEBI:29103"/>
        <note>structural</note>
    </ligand>
</feature>
<feature type="binding site" evidence="2">
    <location>
        <position position="164"/>
    </location>
    <ligand>
        <name>K(+)</name>
        <dbReference type="ChEBI" id="CHEBI:29103"/>
        <note>structural</note>
    </ligand>
</feature>
<feature type="binding site" evidence="2">
    <location>
        <position position="166"/>
    </location>
    <ligand>
        <name>K(+)</name>
        <dbReference type="ChEBI" id="CHEBI:29103"/>
        <note>structural</note>
    </ligand>
</feature>
<organism>
    <name type="scientific">Gracilaria tenuistipitata var. liui</name>
    <name type="common">Red alga</name>
    <dbReference type="NCBI Taxonomy" id="285951"/>
    <lineage>
        <taxon>Eukaryota</taxon>
        <taxon>Rhodophyta</taxon>
        <taxon>Florideophyceae</taxon>
        <taxon>Rhodymeniophycidae</taxon>
        <taxon>Gracilariales</taxon>
        <taxon>Gracilariaceae</taxon>
        <taxon>Gracilaria</taxon>
        <taxon>Gracilaria tenuistipitata</taxon>
    </lineage>
</organism>
<reference key="1">
    <citation type="journal article" date="2004" name="J. Mol. Evol.">
        <title>Comparative analysis of the complete plastid genome sequence of the red alga Gracilaria tenuistipitata var. liui provides insights into the evolution of rhodoplasts and their relationship to other plastids.</title>
        <authorList>
            <person name="Hagopian J.C."/>
            <person name="Reis M."/>
            <person name="Kitajima J.P."/>
            <person name="Bhattacharya D."/>
            <person name="de Oliveira M.C."/>
        </authorList>
    </citation>
    <scope>NUCLEOTIDE SEQUENCE [LARGE SCALE GENOMIC DNA]</scope>
</reference>
<sequence>MTEVLMFDALREATDEEMQNDSSVFILGEDVGHYGGSYKVTKDLHSKYGDLRVLDTPIAENSFMGMAIGAAITGLRPIVEGMNMSFLLLAFNQISNNAGMLRYTSGGNFQIPIVIRGPGGVGRQLGAEHSQRLEAYFQAIPGLKIVACSTPYNAKGLLKSAIRDNNPVIFFEHVLLYNLKDELPNDEYFLPLDKAELVRDGLDVTILTYSRMRHHVMQAVVDLVNDGYNPEVIDLISLKPLDITSIAQSLMKTHKLIIVEECMKTGGIGAEIIAQINDNYFDFLDAPIVRLSSQDIPTPYNGKLEKATVIYPQQIIEAVKSIV</sequence>
<protein>
    <recommendedName>
        <fullName>Pyruvate dehydrogenase E1 component subunit beta</fullName>
        <ecNumber>1.2.4.1</ecNumber>
    </recommendedName>
</protein>
<comment type="function">
    <text evidence="1">The pyruvate dehydrogenase complex catalyzes the overall conversion of pyruvate to acetyl-CoA and CO(2). It contains multiple copies of three enzymatic components: pyruvate dehydrogenase (E1), dihydrolipoamide acetyltransferase (E2) and lipoamide dehydrogenase (E3) (By similarity).</text>
</comment>
<comment type="catalytic activity">
    <reaction>
        <text>N(6)-[(R)-lipoyl]-L-lysyl-[protein] + pyruvate + H(+) = N(6)-[(R)-S(8)-acetyldihydrolipoyl]-L-lysyl-[protein] + CO2</text>
        <dbReference type="Rhea" id="RHEA:19189"/>
        <dbReference type="Rhea" id="RHEA-COMP:10474"/>
        <dbReference type="Rhea" id="RHEA-COMP:10478"/>
        <dbReference type="ChEBI" id="CHEBI:15361"/>
        <dbReference type="ChEBI" id="CHEBI:15378"/>
        <dbReference type="ChEBI" id="CHEBI:16526"/>
        <dbReference type="ChEBI" id="CHEBI:83099"/>
        <dbReference type="ChEBI" id="CHEBI:83111"/>
        <dbReference type="EC" id="1.2.4.1"/>
    </reaction>
</comment>
<comment type="cofactor">
    <cofactor evidence="2">
        <name>thiamine diphosphate</name>
        <dbReference type="ChEBI" id="CHEBI:58937"/>
    </cofactor>
</comment>
<comment type="subunit">
    <text evidence="1">Heterodimer of an alpha and a beta chain.</text>
</comment>
<comment type="subcellular location">
    <subcellularLocation>
        <location>Plastid</location>
        <location>Chloroplast</location>
    </subcellularLocation>
</comment>
<proteinExistence type="inferred from homology"/>
<dbReference type="EC" id="1.2.4.1"/>
<dbReference type="EMBL" id="AY673996">
    <property type="protein sequence ID" value="AAT79704.1"/>
    <property type="molecule type" value="Genomic_DNA"/>
</dbReference>
<dbReference type="RefSeq" id="YP_063629.1">
    <property type="nucleotide sequence ID" value="NC_006137.1"/>
</dbReference>
<dbReference type="SMR" id="Q6B8T1"/>
<dbReference type="GeneID" id="2943994"/>
<dbReference type="GO" id="GO:0009507">
    <property type="term" value="C:chloroplast"/>
    <property type="evidence" value="ECO:0007669"/>
    <property type="project" value="UniProtKB-SubCell"/>
</dbReference>
<dbReference type="GO" id="GO:0046872">
    <property type="term" value="F:metal ion binding"/>
    <property type="evidence" value="ECO:0007669"/>
    <property type="project" value="UniProtKB-KW"/>
</dbReference>
<dbReference type="GO" id="GO:0004739">
    <property type="term" value="F:pyruvate dehydrogenase (acetyl-transferring) activity"/>
    <property type="evidence" value="ECO:0007669"/>
    <property type="project" value="UniProtKB-EC"/>
</dbReference>
<dbReference type="CDD" id="cd07036">
    <property type="entry name" value="TPP_PYR_E1-PDHc-beta_like"/>
    <property type="match status" value="1"/>
</dbReference>
<dbReference type="FunFam" id="3.40.50.920:FF:000001">
    <property type="entry name" value="Pyruvate dehydrogenase E1 beta subunit"/>
    <property type="match status" value="1"/>
</dbReference>
<dbReference type="FunFam" id="3.40.50.970:FF:000001">
    <property type="entry name" value="Pyruvate dehydrogenase E1 beta subunit"/>
    <property type="match status" value="1"/>
</dbReference>
<dbReference type="Gene3D" id="3.40.50.920">
    <property type="match status" value="1"/>
</dbReference>
<dbReference type="Gene3D" id="3.40.50.970">
    <property type="match status" value="1"/>
</dbReference>
<dbReference type="InterPro" id="IPR029061">
    <property type="entry name" value="THDP-binding"/>
</dbReference>
<dbReference type="InterPro" id="IPR009014">
    <property type="entry name" value="Transketo_C/PFOR_II"/>
</dbReference>
<dbReference type="InterPro" id="IPR005475">
    <property type="entry name" value="Transketolase-like_Pyr-bd"/>
</dbReference>
<dbReference type="InterPro" id="IPR033248">
    <property type="entry name" value="Transketolase_C"/>
</dbReference>
<dbReference type="NCBIfam" id="NF006667">
    <property type="entry name" value="PRK09212.1"/>
    <property type="match status" value="1"/>
</dbReference>
<dbReference type="PANTHER" id="PTHR43257">
    <property type="entry name" value="PYRUVATE DEHYDROGENASE E1 COMPONENT BETA SUBUNIT"/>
    <property type="match status" value="1"/>
</dbReference>
<dbReference type="PANTHER" id="PTHR43257:SF2">
    <property type="entry name" value="PYRUVATE DEHYDROGENASE E1 COMPONENT SUBUNIT BETA"/>
    <property type="match status" value="1"/>
</dbReference>
<dbReference type="Pfam" id="PF02779">
    <property type="entry name" value="Transket_pyr"/>
    <property type="match status" value="1"/>
</dbReference>
<dbReference type="Pfam" id="PF02780">
    <property type="entry name" value="Transketolase_C"/>
    <property type="match status" value="1"/>
</dbReference>
<dbReference type="SMART" id="SM00861">
    <property type="entry name" value="Transket_pyr"/>
    <property type="match status" value="1"/>
</dbReference>
<dbReference type="SUPFAM" id="SSF52518">
    <property type="entry name" value="Thiamin diphosphate-binding fold (THDP-binding)"/>
    <property type="match status" value="1"/>
</dbReference>
<dbReference type="SUPFAM" id="SSF52922">
    <property type="entry name" value="TK C-terminal domain-like"/>
    <property type="match status" value="1"/>
</dbReference>
<geneLocation type="chloroplast"/>
<gene>
    <name type="primary">pdhB</name>
    <name type="synonym">odpB</name>
    <name type="ordered locus">Grc000123</name>
</gene>
<keyword id="KW-0150">Chloroplast</keyword>
<keyword id="KW-0479">Metal-binding</keyword>
<keyword id="KW-0560">Oxidoreductase</keyword>
<keyword id="KW-0934">Plastid</keyword>
<keyword id="KW-0630">Potassium</keyword>
<keyword id="KW-0670">Pyruvate</keyword>
<keyword id="KW-0786">Thiamine pyrophosphate</keyword>
<evidence type="ECO:0000250" key="1"/>
<evidence type="ECO:0000250" key="2">
    <source>
        <dbReference type="UniProtKB" id="P11177"/>
    </source>
</evidence>